<feature type="chain" id="PRO_0000243466" description="Large ribosomal subunit protein bL12">
    <location>
        <begin position="1"/>
        <end position="131"/>
    </location>
</feature>
<protein>
    <recommendedName>
        <fullName evidence="1">Large ribosomal subunit protein bL12</fullName>
    </recommendedName>
    <alternativeName>
        <fullName evidence="2">50S ribosomal protein L7/L12</fullName>
    </alternativeName>
</protein>
<comment type="function">
    <text evidence="1">Forms part of the ribosomal stalk which helps the ribosome interact with GTP-bound translation factors. Is thus essential for accurate translation.</text>
</comment>
<comment type="subunit">
    <text evidence="1">Homodimer. Part of the ribosomal stalk of the 50S ribosomal subunit. Forms a multimeric L10(L12)X complex, where L10 forms an elongated spine to which 2 to 4 L12 dimers bind in a sequential fashion. Binds GTP-bound translation factors.</text>
</comment>
<comment type="similarity">
    <text evidence="1">Belongs to the bacterial ribosomal protein bL12 family.</text>
</comment>
<reference key="1">
    <citation type="journal article" date="2006" name="Science">
        <title>Genomic islands and the ecology and evolution of Prochlorococcus.</title>
        <authorList>
            <person name="Coleman M.L."/>
            <person name="Sullivan M.B."/>
            <person name="Martiny A.C."/>
            <person name="Steglich C."/>
            <person name="Barry K."/>
            <person name="Delong E.F."/>
            <person name="Chisholm S.W."/>
        </authorList>
    </citation>
    <scope>NUCLEOTIDE SEQUENCE [LARGE SCALE GENOMIC DNA]</scope>
    <source>
        <strain>MIT 9312</strain>
    </source>
</reference>
<gene>
    <name evidence="1" type="primary">rplL</name>
    <name evidence="1" type="synonym">rpl12</name>
    <name type="ordered locus">PMT9312_0203</name>
</gene>
<accession>Q31CY0</accession>
<keyword id="KW-0687">Ribonucleoprotein</keyword>
<keyword id="KW-0689">Ribosomal protein</keyword>
<name>RL7_PROM9</name>
<organism>
    <name type="scientific">Prochlorococcus marinus (strain MIT 9312)</name>
    <dbReference type="NCBI Taxonomy" id="74546"/>
    <lineage>
        <taxon>Bacteria</taxon>
        <taxon>Bacillati</taxon>
        <taxon>Cyanobacteriota</taxon>
        <taxon>Cyanophyceae</taxon>
        <taxon>Synechococcales</taxon>
        <taxon>Prochlorococcaceae</taxon>
        <taxon>Prochlorococcus</taxon>
    </lineage>
</organism>
<proteinExistence type="inferred from homology"/>
<dbReference type="EMBL" id="CP000111">
    <property type="protein sequence ID" value="ABB49265.1"/>
    <property type="molecule type" value="Genomic_DNA"/>
</dbReference>
<dbReference type="RefSeq" id="WP_011375769.1">
    <property type="nucleotide sequence ID" value="NC_007577.1"/>
</dbReference>
<dbReference type="SMR" id="Q31CY0"/>
<dbReference type="STRING" id="74546.PMT9312_0203"/>
<dbReference type="KEGG" id="pmi:PMT9312_0203"/>
<dbReference type="eggNOG" id="COG0222">
    <property type="taxonomic scope" value="Bacteria"/>
</dbReference>
<dbReference type="HOGENOM" id="CLU_086499_3_0_3"/>
<dbReference type="OrthoDB" id="9811748at2"/>
<dbReference type="Proteomes" id="UP000002715">
    <property type="component" value="Chromosome"/>
</dbReference>
<dbReference type="GO" id="GO:0022625">
    <property type="term" value="C:cytosolic large ribosomal subunit"/>
    <property type="evidence" value="ECO:0007669"/>
    <property type="project" value="TreeGrafter"/>
</dbReference>
<dbReference type="GO" id="GO:0003729">
    <property type="term" value="F:mRNA binding"/>
    <property type="evidence" value="ECO:0007669"/>
    <property type="project" value="TreeGrafter"/>
</dbReference>
<dbReference type="GO" id="GO:0003735">
    <property type="term" value="F:structural constituent of ribosome"/>
    <property type="evidence" value="ECO:0007669"/>
    <property type="project" value="InterPro"/>
</dbReference>
<dbReference type="GO" id="GO:0006412">
    <property type="term" value="P:translation"/>
    <property type="evidence" value="ECO:0007669"/>
    <property type="project" value="UniProtKB-UniRule"/>
</dbReference>
<dbReference type="CDD" id="cd00387">
    <property type="entry name" value="Ribosomal_L7_L12"/>
    <property type="match status" value="1"/>
</dbReference>
<dbReference type="FunFam" id="3.30.1390.10:FF:000001">
    <property type="entry name" value="50S ribosomal protein L7/L12"/>
    <property type="match status" value="1"/>
</dbReference>
<dbReference type="Gene3D" id="3.30.1390.10">
    <property type="match status" value="1"/>
</dbReference>
<dbReference type="Gene3D" id="1.20.5.710">
    <property type="entry name" value="Single helix bin"/>
    <property type="match status" value="1"/>
</dbReference>
<dbReference type="HAMAP" id="MF_00368">
    <property type="entry name" value="Ribosomal_bL12"/>
    <property type="match status" value="1"/>
</dbReference>
<dbReference type="InterPro" id="IPR000206">
    <property type="entry name" value="Ribosomal_bL12"/>
</dbReference>
<dbReference type="InterPro" id="IPR013823">
    <property type="entry name" value="Ribosomal_bL12_C"/>
</dbReference>
<dbReference type="InterPro" id="IPR014719">
    <property type="entry name" value="Ribosomal_bL12_C/ClpS-like"/>
</dbReference>
<dbReference type="InterPro" id="IPR008932">
    <property type="entry name" value="Ribosomal_bL12_oligo"/>
</dbReference>
<dbReference type="InterPro" id="IPR036235">
    <property type="entry name" value="Ribosomal_bL12_oligo_N_sf"/>
</dbReference>
<dbReference type="NCBIfam" id="TIGR00855">
    <property type="entry name" value="L12"/>
    <property type="match status" value="1"/>
</dbReference>
<dbReference type="PANTHER" id="PTHR45987">
    <property type="entry name" value="39S RIBOSOMAL PROTEIN L12"/>
    <property type="match status" value="1"/>
</dbReference>
<dbReference type="PANTHER" id="PTHR45987:SF4">
    <property type="entry name" value="LARGE RIBOSOMAL SUBUNIT PROTEIN BL12M"/>
    <property type="match status" value="1"/>
</dbReference>
<dbReference type="Pfam" id="PF00542">
    <property type="entry name" value="Ribosomal_L12"/>
    <property type="match status" value="1"/>
</dbReference>
<dbReference type="Pfam" id="PF16320">
    <property type="entry name" value="Ribosomal_L12_N"/>
    <property type="match status" value="1"/>
</dbReference>
<dbReference type="SUPFAM" id="SSF54736">
    <property type="entry name" value="ClpS-like"/>
    <property type="match status" value="1"/>
</dbReference>
<dbReference type="SUPFAM" id="SSF48300">
    <property type="entry name" value="Ribosomal protein L7/12, oligomerisation (N-terminal) domain"/>
    <property type="match status" value="1"/>
</dbReference>
<evidence type="ECO:0000255" key="1">
    <source>
        <dbReference type="HAMAP-Rule" id="MF_00368"/>
    </source>
</evidence>
<evidence type="ECO:0000305" key="2"/>
<sequence length="131" mass="13260">MSAKTEEILESLKSLSLLEASELVKQIEEAFGVSAAASAGVVMAAPGATGGDGDGGAAEEKTEFDVVLESFDAAAKIKVLKVVRNATGLGLGDAKALVESAPKTVKEGIAKADAESLKKEIEEAGGKVTLK</sequence>